<keyword id="KW-1005">Bacterial flagellum biogenesis</keyword>
<keyword id="KW-0963">Cytoplasm</keyword>
<keyword id="KW-0678">Repressor</keyword>
<keyword id="KW-0694">RNA-binding</keyword>
<keyword id="KW-0810">Translation regulation</keyword>
<organism>
    <name type="scientific">Bordetella petrii (strain ATCC BAA-461 / DSM 12804 / CCUG 43448)</name>
    <dbReference type="NCBI Taxonomy" id="340100"/>
    <lineage>
        <taxon>Bacteria</taxon>
        <taxon>Pseudomonadati</taxon>
        <taxon>Pseudomonadota</taxon>
        <taxon>Betaproteobacteria</taxon>
        <taxon>Burkholderiales</taxon>
        <taxon>Alcaligenaceae</taxon>
        <taxon>Bordetella</taxon>
    </lineage>
</organism>
<accession>A9IE54</accession>
<evidence type="ECO:0000255" key="1">
    <source>
        <dbReference type="HAMAP-Rule" id="MF_00167"/>
    </source>
</evidence>
<name>CSRA_BORPD</name>
<gene>
    <name evidence="1" type="primary">csrA</name>
    <name type="ordered locus">Bpet1351</name>
</gene>
<reference key="1">
    <citation type="journal article" date="2008" name="BMC Genomics">
        <title>The missing link: Bordetella petrii is endowed with both the metabolic versatility of environmental bacteria and virulence traits of pathogenic Bordetellae.</title>
        <authorList>
            <person name="Gross R."/>
            <person name="Guzman C.A."/>
            <person name="Sebaihia M."/>
            <person name="Martin dos Santos V.A.P."/>
            <person name="Pieper D.H."/>
            <person name="Koebnik R."/>
            <person name="Lechner M."/>
            <person name="Bartels D."/>
            <person name="Buhrmester J."/>
            <person name="Choudhuri J.V."/>
            <person name="Ebensen T."/>
            <person name="Gaigalat L."/>
            <person name="Herrmann S."/>
            <person name="Khachane A.N."/>
            <person name="Larisch C."/>
            <person name="Link S."/>
            <person name="Linke B."/>
            <person name="Meyer F."/>
            <person name="Mormann S."/>
            <person name="Nakunst D."/>
            <person name="Rueckert C."/>
            <person name="Schneiker-Bekel S."/>
            <person name="Schulze K."/>
            <person name="Voerholter F.-J."/>
            <person name="Yevsa T."/>
            <person name="Engle J.T."/>
            <person name="Goldman W.E."/>
            <person name="Puehler A."/>
            <person name="Goebel U.B."/>
            <person name="Goesmann A."/>
            <person name="Bloecker H."/>
            <person name="Kaiser O."/>
            <person name="Martinez-Arias R."/>
        </authorList>
    </citation>
    <scope>NUCLEOTIDE SEQUENCE [LARGE SCALE GENOMIC DNA]</scope>
    <source>
        <strain>ATCC BAA-461 / DSM 12804 / CCUG 43448</strain>
    </source>
</reference>
<feature type="chain" id="PRO_1000097481" description="Translational regulator CsrA">
    <location>
        <begin position="1"/>
        <end position="65"/>
    </location>
</feature>
<protein>
    <recommendedName>
        <fullName evidence="1">Translational regulator CsrA</fullName>
    </recommendedName>
</protein>
<dbReference type="EMBL" id="AM902716">
    <property type="protein sequence ID" value="CAP41686.1"/>
    <property type="molecule type" value="Genomic_DNA"/>
</dbReference>
<dbReference type="SMR" id="A9IE54"/>
<dbReference type="STRING" id="94624.Bpet1351"/>
<dbReference type="KEGG" id="bpt:Bpet1351"/>
<dbReference type="eggNOG" id="COG1551">
    <property type="taxonomic scope" value="Bacteria"/>
</dbReference>
<dbReference type="Proteomes" id="UP000001225">
    <property type="component" value="Chromosome"/>
</dbReference>
<dbReference type="GO" id="GO:0005829">
    <property type="term" value="C:cytosol"/>
    <property type="evidence" value="ECO:0007669"/>
    <property type="project" value="TreeGrafter"/>
</dbReference>
<dbReference type="GO" id="GO:0048027">
    <property type="term" value="F:mRNA 5'-UTR binding"/>
    <property type="evidence" value="ECO:0007669"/>
    <property type="project" value="UniProtKB-UniRule"/>
</dbReference>
<dbReference type="GO" id="GO:0044781">
    <property type="term" value="P:bacterial-type flagellum organization"/>
    <property type="evidence" value="ECO:0007669"/>
    <property type="project" value="UniProtKB-KW"/>
</dbReference>
<dbReference type="GO" id="GO:0006402">
    <property type="term" value="P:mRNA catabolic process"/>
    <property type="evidence" value="ECO:0007669"/>
    <property type="project" value="InterPro"/>
</dbReference>
<dbReference type="GO" id="GO:0045947">
    <property type="term" value="P:negative regulation of translational initiation"/>
    <property type="evidence" value="ECO:0007669"/>
    <property type="project" value="UniProtKB-UniRule"/>
</dbReference>
<dbReference type="GO" id="GO:1902208">
    <property type="term" value="P:regulation of bacterial-type flagellum assembly"/>
    <property type="evidence" value="ECO:0007669"/>
    <property type="project" value="UniProtKB-UniRule"/>
</dbReference>
<dbReference type="GO" id="GO:0006109">
    <property type="term" value="P:regulation of carbohydrate metabolic process"/>
    <property type="evidence" value="ECO:0007669"/>
    <property type="project" value="InterPro"/>
</dbReference>
<dbReference type="FunFam" id="2.60.40.4380:FF:000002">
    <property type="entry name" value="Translational regulator CsrA"/>
    <property type="match status" value="1"/>
</dbReference>
<dbReference type="Gene3D" id="2.60.40.4380">
    <property type="entry name" value="Translational regulator CsrA"/>
    <property type="match status" value="1"/>
</dbReference>
<dbReference type="HAMAP" id="MF_00167">
    <property type="entry name" value="CsrA"/>
    <property type="match status" value="1"/>
</dbReference>
<dbReference type="InterPro" id="IPR003751">
    <property type="entry name" value="CsrA"/>
</dbReference>
<dbReference type="InterPro" id="IPR036107">
    <property type="entry name" value="CsrA_sf"/>
</dbReference>
<dbReference type="NCBIfam" id="TIGR00202">
    <property type="entry name" value="csrA"/>
    <property type="match status" value="1"/>
</dbReference>
<dbReference type="NCBIfam" id="NF002469">
    <property type="entry name" value="PRK01712.1"/>
    <property type="match status" value="1"/>
</dbReference>
<dbReference type="PANTHER" id="PTHR34984">
    <property type="entry name" value="CARBON STORAGE REGULATOR"/>
    <property type="match status" value="1"/>
</dbReference>
<dbReference type="PANTHER" id="PTHR34984:SF1">
    <property type="entry name" value="CARBON STORAGE REGULATOR"/>
    <property type="match status" value="1"/>
</dbReference>
<dbReference type="Pfam" id="PF02599">
    <property type="entry name" value="CsrA"/>
    <property type="match status" value="1"/>
</dbReference>
<dbReference type="SUPFAM" id="SSF117130">
    <property type="entry name" value="CsrA-like"/>
    <property type="match status" value="1"/>
</dbReference>
<proteinExistence type="inferred from homology"/>
<sequence>MLILTRRIGETIHIGDDITVTVLGINGQQVKFGTSAPREVDVHRQEIYERIHPGSASHFSGKHPY</sequence>
<comment type="function">
    <text evidence="1">A translational regulator that binds mRNA to regulate translation initiation and/or mRNA stability. Usually binds in the 5'-UTR at or near the Shine-Dalgarno sequence preventing ribosome-binding, thus repressing translation. Its main target seems to be the major flagellin gene, while its function is anatagonized by FliW.</text>
</comment>
<comment type="subunit">
    <text evidence="1">Homodimer; the beta-strands of each monomer intercalate to form a hydrophobic core, while the alpha-helices form wings that extend away from the core.</text>
</comment>
<comment type="subcellular location">
    <subcellularLocation>
        <location evidence="1">Cytoplasm</location>
    </subcellularLocation>
</comment>
<comment type="similarity">
    <text evidence="1">Belongs to the CsrA/RsmA family.</text>
</comment>